<evidence type="ECO:0000250" key="1"/>
<evidence type="ECO:0000250" key="2">
    <source>
        <dbReference type="UniProtKB" id="P78369"/>
    </source>
</evidence>
<evidence type="ECO:0000250" key="3">
    <source>
        <dbReference type="UniProtKB" id="Q9Z0S6"/>
    </source>
</evidence>
<evidence type="ECO:0000255" key="4"/>
<evidence type="ECO:0000305" key="5"/>
<accession>Q5R8E5</accession>
<accession>H2NK57</accession>
<accession>K7EV28</accession>
<protein>
    <recommendedName>
        <fullName>Claudin-10</fullName>
    </recommendedName>
</protein>
<sequence>MASTASEIIAFMVSISGWVLVSSTLPTDYWKVSTIDGTVITTATYWANLWKACVTDSTGVSNCKDFPSMLALDGYIQACRGLMIAAVSLGFFGSIFALFGMKCTKVGGSDKAKAKIACLAGIVFILSGLCSMTGCSLYANKITTEFFDPLFVEQKYELGAALFIGWAGASLCIIGGVIFCFSISDNNKTPRYAYNGATSVMSSRTKYHGGEDFKTTNPSKQFDKNAYV</sequence>
<name>CLD10_PONAB</name>
<keyword id="KW-0025">Alternative splicing</keyword>
<keyword id="KW-0965">Cell junction</keyword>
<keyword id="KW-1003">Cell membrane</keyword>
<keyword id="KW-0406">Ion transport</keyword>
<keyword id="KW-0472">Membrane</keyword>
<keyword id="KW-1185">Reference proteome</keyword>
<keyword id="KW-0796">Tight junction</keyword>
<keyword id="KW-0812">Transmembrane</keyword>
<keyword id="KW-1133">Transmembrane helix</keyword>
<keyword id="KW-0813">Transport</keyword>
<reference key="1">
    <citation type="submission" date="2004-11" db="EMBL/GenBank/DDBJ databases">
        <authorList>
            <consortium name="The German cDNA consortium"/>
        </authorList>
    </citation>
    <scope>NUCLEOTIDE SEQUENCE [LARGE SCALE MRNA] (ISOFORM 1)</scope>
    <source>
        <tissue>Kidney</tissue>
    </source>
</reference>
<reference key="2">
    <citation type="submission" date="2008-02" db="EMBL/GenBank/DDBJ databases">
        <title>A 6x draft sequence assembly of the Pongo pygmaeus abelii genome.</title>
        <authorList>
            <person name="Wilson R.K."/>
            <person name="Mardis E."/>
        </authorList>
    </citation>
    <scope>NUCLEOTIDE SEQUENCE [LARGE SCALE GENOMIC DNA]</scope>
</reference>
<proteinExistence type="evidence at transcript level"/>
<gene>
    <name type="primary">CLDN10</name>
</gene>
<organism>
    <name type="scientific">Pongo abelii</name>
    <name type="common">Sumatran orangutan</name>
    <name type="synonym">Pongo pygmaeus abelii</name>
    <dbReference type="NCBI Taxonomy" id="9601"/>
    <lineage>
        <taxon>Eukaryota</taxon>
        <taxon>Metazoa</taxon>
        <taxon>Chordata</taxon>
        <taxon>Craniata</taxon>
        <taxon>Vertebrata</taxon>
        <taxon>Euteleostomi</taxon>
        <taxon>Mammalia</taxon>
        <taxon>Eutheria</taxon>
        <taxon>Euarchontoglires</taxon>
        <taxon>Primates</taxon>
        <taxon>Haplorrhini</taxon>
        <taxon>Catarrhini</taxon>
        <taxon>Hominidae</taxon>
        <taxon>Pongo</taxon>
    </lineage>
</organism>
<comment type="function">
    <text evidence="2 3">Forms paracellular channels: polymerizes in tight junction strands with cation- and anion-selective channels through the strands, conveying epithelial permeability in a process known as paracellular tight junction permeability (By similarity). In sweat glands and in the thick ascending limb (TAL) of Henle's loop in kidney, it controls paracellular sodium permeability which is essential for proper sweat production and renal function (By similarity). In renal proximal tubules, it conveys selective chloride over hydrogencarbonate anion permeability which is required for renal chloride reabsorption and salt homeostasis (By similarity).</text>
</comment>
<comment type="catalytic activity">
    <reaction evidence="2">
        <text>Na(+)(in) = Na(+)(out)</text>
        <dbReference type="Rhea" id="RHEA:34963"/>
        <dbReference type="ChEBI" id="CHEBI:29101"/>
    </reaction>
</comment>
<comment type="catalytic activity">
    <reaction evidence="2">
        <text>Li(+)(in) = Li(+)(out)</text>
        <dbReference type="Rhea" id="RHEA:78551"/>
        <dbReference type="ChEBI" id="CHEBI:49713"/>
    </reaction>
</comment>
<comment type="catalytic activity">
    <reaction evidence="2">
        <text>K(+)(in) = K(+)(out)</text>
        <dbReference type="Rhea" id="RHEA:29463"/>
        <dbReference type="ChEBI" id="CHEBI:29103"/>
    </reaction>
</comment>
<comment type="catalytic activity">
    <reaction evidence="2">
        <text>Rb(+)(in) = Rb(+)(out)</text>
        <dbReference type="Rhea" id="RHEA:78547"/>
        <dbReference type="ChEBI" id="CHEBI:49847"/>
    </reaction>
</comment>
<comment type="catalytic activity">
    <reaction evidence="2">
        <text>Cs(+)(in) = Cs(+)(out)</text>
        <dbReference type="Rhea" id="RHEA:78555"/>
        <dbReference type="ChEBI" id="CHEBI:49547"/>
    </reaction>
</comment>
<comment type="catalytic activity">
    <reaction evidence="2">
        <text>NH4(+)(in) = NH4(+)(out)</text>
        <dbReference type="Rhea" id="RHEA:28747"/>
        <dbReference type="ChEBI" id="CHEBI:28938"/>
    </reaction>
</comment>
<comment type="catalytic activity">
    <reaction evidence="2">
        <text>methylamine(out) = methylamine(in)</text>
        <dbReference type="Rhea" id="RHEA:74391"/>
        <dbReference type="ChEBI" id="CHEBI:59338"/>
    </reaction>
</comment>
<comment type="catalytic activity">
    <reaction evidence="2">
        <text>Mg(2+)(in) = Mg(2+)(out)</text>
        <dbReference type="Rhea" id="RHEA:29827"/>
        <dbReference type="ChEBI" id="CHEBI:18420"/>
    </reaction>
</comment>
<comment type="catalytic activity">
    <reaction evidence="2">
        <text>Ca(2+)(in) = Ca(2+)(out)</text>
        <dbReference type="Rhea" id="RHEA:29671"/>
        <dbReference type="ChEBI" id="CHEBI:29108"/>
    </reaction>
</comment>
<comment type="catalytic activity">
    <reaction evidence="2">
        <text>Sr(2+)(in) = Sr(2+)(out)</text>
        <dbReference type="Rhea" id="RHEA:78679"/>
        <dbReference type="ChEBI" id="CHEBI:35104"/>
    </reaction>
</comment>
<comment type="catalytic activity">
    <reaction evidence="3">
        <text>chloride(in) = chloride(out)</text>
        <dbReference type="Rhea" id="RHEA:29823"/>
        <dbReference type="ChEBI" id="CHEBI:17996"/>
    </reaction>
</comment>
<comment type="catalytic activity">
    <reaction evidence="2">
        <text>nitrate(in) = nitrate(out)</text>
        <dbReference type="Rhea" id="RHEA:34923"/>
        <dbReference type="ChEBI" id="CHEBI:17632"/>
    </reaction>
</comment>
<comment type="subunit">
    <text evidence="2">Can form homodimers both in trans (interaction between CLDN10 molecules in opposing membranes) and in cis (interaction between CLDN10 molecules within one membrane). Interacts with CLDN19.</text>
</comment>
<comment type="subcellular location">
    <subcellularLocation>
        <location evidence="2">Cell junction</location>
        <location evidence="2">Tight junction</location>
    </subcellularLocation>
    <subcellularLocation>
        <location evidence="2">Cell membrane</location>
        <topology evidence="4">Multi-pass membrane protein</topology>
    </subcellularLocation>
</comment>
<comment type="alternative products">
    <event type="alternative splicing"/>
    <isoform>
        <id>Q5R8E5-1</id>
        <name>1</name>
        <sequence type="displayed"/>
    </isoform>
    <isoform>
        <id>Q5R8E5-2</id>
        <name>2</name>
        <sequence type="described" ref="VSP_053554"/>
    </isoform>
</comment>
<comment type="domain">
    <text evidence="1">The fourth transmembrane region (161-181) is necessary for integration into tight junctions.</text>
</comment>
<comment type="similarity">
    <text evidence="5">Belongs to the claudin family.</text>
</comment>
<comment type="sequence caution" evidence="5">
    <conflict type="frameshift">
        <sequence resource="EMBL-CDS" id="CAH91965"/>
    </conflict>
</comment>
<feature type="chain" id="PRO_0000144759" description="Claudin-10">
    <location>
        <begin position="1"/>
        <end position="228"/>
    </location>
</feature>
<feature type="transmembrane region" description="Helical" evidence="4">
    <location>
        <begin position="1"/>
        <end position="21"/>
    </location>
</feature>
<feature type="topological domain" description="Extracellular" evidence="4">
    <location>
        <begin position="22"/>
        <end position="80"/>
    </location>
</feature>
<feature type="transmembrane region" description="Helical" evidence="4">
    <location>
        <begin position="81"/>
        <end position="101"/>
    </location>
</feature>
<feature type="topological domain" description="Cytoplasmic" evidence="4">
    <location>
        <begin position="102"/>
        <end position="115"/>
    </location>
</feature>
<feature type="transmembrane region" description="Helical" evidence="4">
    <location>
        <begin position="116"/>
        <end position="136"/>
    </location>
</feature>
<feature type="topological domain" description="Extracellular" evidence="4">
    <location>
        <begin position="137"/>
        <end position="160"/>
    </location>
</feature>
<feature type="transmembrane region" description="Helical" evidence="4">
    <location>
        <begin position="161"/>
        <end position="181"/>
    </location>
</feature>
<feature type="topological domain" description="Cytoplasmic" evidence="4">
    <location>
        <begin position="182"/>
        <end position="228"/>
    </location>
</feature>
<feature type="splice variant" id="VSP_053554" description="In isoform 2." evidence="5">
    <original>MASTASEIIAFMVSISGWVLVSSTLPTDYWKVSTIDGTVITTATYWANLWKACVTDSTGVSNCKDFPSMLALD</original>
    <variation>MSRAQIWALVSGVGGFGALVAATTSNEWKVTTRASSVITATWVYQGLWMNCAGNALGSFHCRPHFTIFKVA</variation>
    <location>
        <begin position="1"/>
        <end position="73"/>
    </location>
</feature>
<feature type="sequence conflict" description="In Ref. 1; CAH91965." evidence="5" ref="1">
    <original>F</original>
    <variation>S</variation>
    <location>
        <position position="91"/>
    </location>
</feature>
<dbReference type="EMBL" id="CR859807">
    <property type="protein sequence ID" value="CAH91965.1"/>
    <property type="status" value="ALT_FRAME"/>
    <property type="molecule type" value="mRNA"/>
</dbReference>
<dbReference type="EMBL" id="ABGA01175643">
    <property type="status" value="NOT_ANNOTATED_CDS"/>
    <property type="molecule type" value="Genomic_DNA"/>
</dbReference>
<dbReference type="EMBL" id="ABGA01175644">
    <property type="status" value="NOT_ANNOTATED_CDS"/>
    <property type="molecule type" value="Genomic_DNA"/>
</dbReference>
<dbReference type="EMBL" id="ABGA01175645">
    <property type="status" value="NOT_ANNOTATED_CDS"/>
    <property type="molecule type" value="Genomic_DNA"/>
</dbReference>
<dbReference type="EMBL" id="ABGA01175646">
    <property type="status" value="NOT_ANNOTATED_CDS"/>
    <property type="molecule type" value="Genomic_DNA"/>
</dbReference>
<dbReference type="EMBL" id="ABGA01175647">
    <property type="status" value="NOT_ANNOTATED_CDS"/>
    <property type="molecule type" value="Genomic_DNA"/>
</dbReference>
<dbReference type="EMBL" id="ABGA01175648">
    <property type="status" value="NOT_ANNOTATED_CDS"/>
    <property type="molecule type" value="Genomic_DNA"/>
</dbReference>
<dbReference type="EMBL" id="ABGA01175649">
    <property type="status" value="NOT_ANNOTATED_CDS"/>
    <property type="molecule type" value="Genomic_DNA"/>
</dbReference>
<dbReference type="EMBL" id="ABGA01175650">
    <property type="status" value="NOT_ANNOTATED_CDS"/>
    <property type="molecule type" value="Genomic_DNA"/>
</dbReference>
<dbReference type="EMBL" id="ABGA01175651">
    <property type="status" value="NOT_ANNOTATED_CDS"/>
    <property type="molecule type" value="Genomic_DNA"/>
</dbReference>
<dbReference type="EMBL" id="ABGA01175652">
    <property type="status" value="NOT_ANNOTATED_CDS"/>
    <property type="molecule type" value="Genomic_DNA"/>
</dbReference>
<dbReference type="EMBL" id="ABGA01175653">
    <property type="status" value="NOT_ANNOTATED_CDS"/>
    <property type="molecule type" value="Genomic_DNA"/>
</dbReference>
<dbReference type="EMBL" id="ABGA01175654">
    <property type="status" value="NOT_ANNOTATED_CDS"/>
    <property type="molecule type" value="Genomic_DNA"/>
</dbReference>
<dbReference type="EMBL" id="ABGA01175655">
    <property type="status" value="NOT_ANNOTATED_CDS"/>
    <property type="molecule type" value="Genomic_DNA"/>
</dbReference>
<dbReference type="EMBL" id="ABGA01175656">
    <property type="status" value="NOT_ANNOTATED_CDS"/>
    <property type="molecule type" value="Genomic_DNA"/>
</dbReference>
<dbReference type="EMBL" id="ABGA01175657">
    <property type="status" value="NOT_ANNOTATED_CDS"/>
    <property type="molecule type" value="Genomic_DNA"/>
</dbReference>
<dbReference type="EMBL" id="ABGA01175658">
    <property type="status" value="NOT_ANNOTATED_CDS"/>
    <property type="molecule type" value="Genomic_DNA"/>
</dbReference>
<dbReference type="EMBL" id="ABGA01175659">
    <property type="status" value="NOT_ANNOTATED_CDS"/>
    <property type="molecule type" value="Genomic_DNA"/>
</dbReference>
<dbReference type="EMBL" id="ABGA01175660">
    <property type="status" value="NOT_ANNOTATED_CDS"/>
    <property type="molecule type" value="Genomic_DNA"/>
</dbReference>
<dbReference type="RefSeq" id="XP_003778275.3">
    <molecule id="Q5R8E5-1"/>
    <property type="nucleotide sequence ID" value="XM_003778227.5"/>
</dbReference>
<dbReference type="RefSeq" id="XP_009247009.2">
    <molecule id="Q5R8E5-2"/>
    <property type="nucleotide sequence ID" value="XM_009248734.4"/>
</dbReference>
<dbReference type="SMR" id="Q5R8E5"/>
<dbReference type="FunCoup" id="Q5R8E5">
    <property type="interactions" value="333"/>
</dbReference>
<dbReference type="STRING" id="9601.ENSPPYP00000006209"/>
<dbReference type="Ensembl" id="ENSPPYT00000006454.2">
    <molecule id="Q5R8E5-1"/>
    <property type="protein sequence ID" value="ENSPPYP00000006209.2"/>
    <property type="gene ID" value="ENSPPYG00000005449.3"/>
</dbReference>
<dbReference type="Ensembl" id="ENSPPYT00000060673.1">
    <molecule id="Q5R8E5-2"/>
    <property type="protein sequence ID" value="ENSPPYP00000030226.1"/>
    <property type="gene ID" value="ENSPPYG00000005449.3"/>
</dbReference>
<dbReference type="GeneID" id="100442960"/>
<dbReference type="eggNOG" id="ENOG502QPNP">
    <property type="taxonomic scope" value="Eukaryota"/>
</dbReference>
<dbReference type="GeneTree" id="ENSGT00940000155232"/>
<dbReference type="InParanoid" id="Q5R8E5"/>
<dbReference type="OMA" id="CKEFISM"/>
<dbReference type="OrthoDB" id="9936647at2759"/>
<dbReference type="TreeFam" id="TF331936"/>
<dbReference type="Proteomes" id="UP000001595">
    <property type="component" value="Chromosome 13"/>
</dbReference>
<dbReference type="GO" id="GO:0005923">
    <property type="term" value="C:bicellular tight junction"/>
    <property type="evidence" value="ECO:0007669"/>
    <property type="project" value="UniProtKB-SubCell"/>
</dbReference>
<dbReference type="GO" id="GO:0005737">
    <property type="term" value="C:cytoplasm"/>
    <property type="evidence" value="ECO:0007669"/>
    <property type="project" value="Ensembl"/>
</dbReference>
<dbReference type="GO" id="GO:0005886">
    <property type="term" value="C:plasma membrane"/>
    <property type="evidence" value="ECO:0007669"/>
    <property type="project" value="UniProtKB-SubCell"/>
</dbReference>
<dbReference type="GO" id="GO:0005198">
    <property type="term" value="F:structural molecule activity"/>
    <property type="evidence" value="ECO:0007669"/>
    <property type="project" value="InterPro"/>
</dbReference>
<dbReference type="GO" id="GO:0006811">
    <property type="term" value="P:monoatomic ion transport"/>
    <property type="evidence" value="ECO:0007669"/>
    <property type="project" value="UniProtKB-KW"/>
</dbReference>
<dbReference type="GO" id="GO:0043269">
    <property type="term" value="P:regulation of monoatomic ion transport"/>
    <property type="evidence" value="ECO:0000250"/>
    <property type="project" value="UniProtKB"/>
</dbReference>
<dbReference type="FunFam" id="1.20.140.150:FF:000001">
    <property type="entry name" value="Claudin"/>
    <property type="match status" value="1"/>
</dbReference>
<dbReference type="Gene3D" id="1.20.140.150">
    <property type="match status" value="1"/>
</dbReference>
<dbReference type="InterPro" id="IPR006187">
    <property type="entry name" value="Claudin"/>
</dbReference>
<dbReference type="InterPro" id="IPR003554">
    <property type="entry name" value="Claudin10"/>
</dbReference>
<dbReference type="InterPro" id="IPR017974">
    <property type="entry name" value="Claudin_CS"/>
</dbReference>
<dbReference type="InterPro" id="IPR004031">
    <property type="entry name" value="PMP22/EMP/MP20/Claudin"/>
</dbReference>
<dbReference type="PANTHER" id="PTHR12002">
    <property type="entry name" value="CLAUDIN"/>
    <property type="match status" value="1"/>
</dbReference>
<dbReference type="Pfam" id="PF00822">
    <property type="entry name" value="PMP22_Claudin"/>
    <property type="match status" value="1"/>
</dbReference>
<dbReference type="PRINTS" id="PR01077">
    <property type="entry name" value="CLAUDIN"/>
</dbReference>
<dbReference type="PRINTS" id="PR01383">
    <property type="entry name" value="CLAUDIN10"/>
</dbReference>
<dbReference type="PROSITE" id="PS01346">
    <property type="entry name" value="CLAUDIN"/>
    <property type="match status" value="1"/>
</dbReference>